<accession>A4W6R5</accession>
<name>EFTS_ENT38</name>
<evidence type="ECO:0000255" key="1">
    <source>
        <dbReference type="HAMAP-Rule" id="MF_00050"/>
    </source>
</evidence>
<gene>
    <name evidence="1" type="primary">tsf</name>
    <name type="ordered locus">Ent638_0708</name>
</gene>
<feature type="chain" id="PRO_1000057354" description="Elongation factor Ts">
    <location>
        <begin position="1"/>
        <end position="283"/>
    </location>
</feature>
<feature type="region of interest" description="Involved in Mg(2+) ion dislocation from EF-Tu" evidence="1">
    <location>
        <begin position="80"/>
        <end position="83"/>
    </location>
</feature>
<reference key="1">
    <citation type="journal article" date="2010" name="PLoS Genet.">
        <title>Genome sequence of the plant growth promoting endophytic bacterium Enterobacter sp. 638.</title>
        <authorList>
            <person name="Taghavi S."/>
            <person name="van der Lelie D."/>
            <person name="Hoffman A."/>
            <person name="Zhang Y.B."/>
            <person name="Walla M.D."/>
            <person name="Vangronsveld J."/>
            <person name="Newman L."/>
            <person name="Monchy S."/>
        </authorList>
    </citation>
    <scope>NUCLEOTIDE SEQUENCE [LARGE SCALE GENOMIC DNA]</scope>
    <source>
        <strain>638</strain>
    </source>
</reference>
<sequence length="283" mass="30371">MAEITASLVKELRERTGAGMMDCKKALVEANGDIELAIENMRKSGAIKAAKKAGNVAADGVILTKIDGTYGIILEVNCQTDFVAKDGGFQAFANKVLDAAIAGKITDVDVLKAQFEEERVALVAKIGENINIRRVASIEGDVLGSYQHGARIGVLVAAKGADEELVKQLAMHIAASKPEFVKPEDVSAEVVEKEYQVQLDIAMQSGKPKEIAEKMVEGRMKKFTGEVSLTGQPFVMDPTKSVAQLLKEHNADVTGFIRFEVGEGIEKVETDFAAEVAAMSKQS</sequence>
<keyword id="KW-0963">Cytoplasm</keyword>
<keyword id="KW-0251">Elongation factor</keyword>
<keyword id="KW-0648">Protein biosynthesis</keyword>
<protein>
    <recommendedName>
        <fullName evidence="1">Elongation factor Ts</fullName>
        <shortName evidence="1">EF-Ts</shortName>
    </recommendedName>
</protein>
<proteinExistence type="inferred from homology"/>
<comment type="function">
    <text evidence="1">Associates with the EF-Tu.GDP complex and induces the exchange of GDP to GTP. It remains bound to the aminoacyl-tRNA.EF-Tu.GTP complex up to the GTP hydrolysis stage on the ribosome.</text>
</comment>
<comment type="subcellular location">
    <subcellularLocation>
        <location evidence="1">Cytoplasm</location>
    </subcellularLocation>
</comment>
<comment type="similarity">
    <text evidence="1">Belongs to the EF-Ts family.</text>
</comment>
<dbReference type="EMBL" id="CP000653">
    <property type="protein sequence ID" value="ABP59395.1"/>
    <property type="molecule type" value="Genomic_DNA"/>
</dbReference>
<dbReference type="RefSeq" id="WP_012016116.1">
    <property type="nucleotide sequence ID" value="NC_009436.1"/>
</dbReference>
<dbReference type="SMR" id="A4W6R5"/>
<dbReference type="STRING" id="399742.Ent638_0708"/>
<dbReference type="GeneID" id="93307882"/>
<dbReference type="KEGG" id="ent:Ent638_0708"/>
<dbReference type="eggNOG" id="COG0264">
    <property type="taxonomic scope" value="Bacteria"/>
</dbReference>
<dbReference type="HOGENOM" id="CLU_047155_0_2_6"/>
<dbReference type="OrthoDB" id="9808348at2"/>
<dbReference type="Proteomes" id="UP000000230">
    <property type="component" value="Chromosome"/>
</dbReference>
<dbReference type="GO" id="GO:0005737">
    <property type="term" value="C:cytoplasm"/>
    <property type="evidence" value="ECO:0007669"/>
    <property type="project" value="UniProtKB-SubCell"/>
</dbReference>
<dbReference type="GO" id="GO:0003746">
    <property type="term" value="F:translation elongation factor activity"/>
    <property type="evidence" value="ECO:0007669"/>
    <property type="project" value="UniProtKB-UniRule"/>
</dbReference>
<dbReference type="CDD" id="cd14275">
    <property type="entry name" value="UBA_EF-Ts"/>
    <property type="match status" value="1"/>
</dbReference>
<dbReference type="FunFam" id="1.10.286.20:FF:000001">
    <property type="entry name" value="Elongation factor Ts"/>
    <property type="match status" value="1"/>
</dbReference>
<dbReference type="FunFam" id="1.10.8.10:FF:000001">
    <property type="entry name" value="Elongation factor Ts"/>
    <property type="match status" value="1"/>
</dbReference>
<dbReference type="FunFam" id="3.30.479.20:FF:000001">
    <property type="entry name" value="Elongation factor Ts"/>
    <property type="match status" value="1"/>
</dbReference>
<dbReference type="Gene3D" id="1.10.286.20">
    <property type="match status" value="1"/>
</dbReference>
<dbReference type="Gene3D" id="1.10.8.10">
    <property type="entry name" value="DNA helicase RuvA subunit, C-terminal domain"/>
    <property type="match status" value="1"/>
</dbReference>
<dbReference type="Gene3D" id="3.30.479.20">
    <property type="entry name" value="Elongation factor Ts, dimerisation domain"/>
    <property type="match status" value="2"/>
</dbReference>
<dbReference type="HAMAP" id="MF_00050">
    <property type="entry name" value="EF_Ts"/>
    <property type="match status" value="1"/>
</dbReference>
<dbReference type="InterPro" id="IPR036402">
    <property type="entry name" value="EF-Ts_dimer_sf"/>
</dbReference>
<dbReference type="InterPro" id="IPR001816">
    <property type="entry name" value="Transl_elong_EFTs/EF1B"/>
</dbReference>
<dbReference type="InterPro" id="IPR014039">
    <property type="entry name" value="Transl_elong_EFTs/EF1B_dimer"/>
</dbReference>
<dbReference type="InterPro" id="IPR018101">
    <property type="entry name" value="Transl_elong_Ts_CS"/>
</dbReference>
<dbReference type="InterPro" id="IPR009060">
    <property type="entry name" value="UBA-like_sf"/>
</dbReference>
<dbReference type="NCBIfam" id="TIGR00116">
    <property type="entry name" value="tsf"/>
    <property type="match status" value="1"/>
</dbReference>
<dbReference type="PANTHER" id="PTHR11741">
    <property type="entry name" value="ELONGATION FACTOR TS"/>
    <property type="match status" value="1"/>
</dbReference>
<dbReference type="PANTHER" id="PTHR11741:SF0">
    <property type="entry name" value="ELONGATION FACTOR TS, MITOCHONDRIAL"/>
    <property type="match status" value="1"/>
</dbReference>
<dbReference type="Pfam" id="PF00889">
    <property type="entry name" value="EF_TS"/>
    <property type="match status" value="1"/>
</dbReference>
<dbReference type="SUPFAM" id="SSF54713">
    <property type="entry name" value="Elongation factor Ts (EF-Ts), dimerisation domain"/>
    <property type="match status" value="2"/>
</dbReference>
<dbReference type="SUPFAM" id="SSF46934">
    <property type="entry name" value="UBA-like"/>
    <property type="match status" value="1"/>
</dbReference>
<dbReference type="PROSITE" id="PS01126">
    <property type="entry name" value="EF_TS_1"/>
    <property type="match status" value="1"/>
</dbReference>
<dbReference type="PROSITE" id="PS01127">
    <property type="entry name" value="EF_TS_2"/>
    <property type="match status" value="1"/>
</dbReference>
<organism>
    <name type="scientific">Enterobacter sp. (strain 638)</name>
    <dbReference type="NCBI Taxonomy" id="399742"/>
    <lineage>
        <taxon>Bacteria</taxon>
        <taxon>Pseudomonadati</taxon>
        <taxon>Pseudomonadota</taxon>
        <taxon>Gammaproteobacteria</taxon>
        <taxon>Enterobacterales</taxon>
        <taxon>Enterobacteriaceae</taxon>
        <taxon>Enterobacter</taxon>
    </lineage>
</organism>